<gene>
    <name evidence="1" type="primary">rplI</name>
    <name type="ordered locus">DvMF_1352</name>
</gene>
<evidence type="ECO:0000255" key="1">
    <source>
        <dbReference type="HAMAP-Rule" id="MF_00503"/>
    </source>
</evidence>
<evidence type="ECO:0000305" key="2"/>
<feature type="chain" id="PRO_1000126903" description="Large ribosomal subunit protein bL9">
    <location>
        <begin position="1"/>
        <end position="167"/>
    </location>
</feature>
<accession>B8DRL4</accession>
<sequence>MKLILRADVENLGRLGDVVTVKPGFGRNFLLPQGLAMLASDANLKAFELERKKLQAKMDALRTAASDLSAKIAATELVIPVRVGENDKLYGSVTTAIIGDALAEKGVDIDRRRILLDAAIRTLGTHEVRVRLHADVVATLNVKVVAEDKVSDAAEPVVEAEPETPAE</sequence>
<comment type="function">
    <text evidence="1">Binds to the 23S rRNA.</text>
</comment>
<comment type="similarity">
    <text evidence="1">Belongs to the bacterial ribosomal protein bL9 family.</text>
</comment>
<dbReference type="EMBL" id="CP001197">
    <property type="protein sequence ID" value="ACL08301.1"/>
    <property type="molecule type" value="Genomic_DNA"/>
</dbReference>
<dbReference type="SMR" id="B8DRL4"/>
<dbReference type="STRING" id="883.DvMF_1352"/>
<dbReference type="KEGG" id="dvm:DvMF_1352"/>
<dbReference type="eggNOG" id="COG0359">
    <property type="taxonomic scope" value="Bacteria"/>
</dbReference>
<dbReference type="HOGENOM" id="CLU_078938_3_0_7"/>
<dbReference type="OrthoDB" id="9788336at2"/>
<dbReference type="GO" id="GO:1990904">
    <property type="term" value="C:ribonucleoprotein complex"/>
    <property type="evidence" value="ECO:0007669"/>
    <property type="project" value="UniProtKB-KW"/>
</dbReference>
<dbReference type="GO" id="GO:0005840">
    <property type="term" value="C:ribosome"/>
    <property type="evidence" value="ECO:0007669"/>
    <property type="project" value="UniProtKB-KW"/>
</dbReference>
<dbReference type="GO" id="GO:0019843">
    <property type="term" value="F:rRNA binding"/>
    <property type="evidence" value="ECO:0007669"/>
    <property type="project" value="UniProtKB-UniRule"/>
</dbReference>
<dbReference type="GO" id="GO:0003735">
    <property type="term" value="F:structural constituent of ribosome"/>
    <property type="evidence" value="ECO:0007669"/>
    <property type="project" value="InterPro"/>
</dbReference>
<dbReference type="GO" id="GO:0006412">
    <property type="term" value="P:translation"/>
    <property type="evidence" value="ECO:0007669"/>
    <property type="project" value="UniProtKB-UniRule"/>
</dbReference>
<dbReference type="FunFam" id="3.40.5.10:FF:000003">
    <property type="entry name" value="50S ribosomal protein L9"/>
    <property type="match status" value="1"/>
</dbReference>
<dbReference type="Gene3D" id="3.10.430.100">
    <property type="entry name" value="Ribosomal protein L9, C-terminal domain"/>
    <property type="match status" value="1"/>
</dbReference>
<dbReference type="Gene3D" id="3.40.5.10">
    <property type="entry name" value="Ribosomal protein L9, N-terminal domain"/>
    <property type="match status" value="1"/>
</dbReference>
<dbReference type="HAMAP" id="MF_00503">
    <property type="entry name" value="Ribosomal_bL9"/>
    <property type="match status" value="1"/>
</dbReference>
<dbReference type="InterPro" id="IPR000244">
    <property type="entry name" value="Ribosomal_bL9"/>
</dbReference>
<dbReference type="InterPro" id="IPR009027">
    <property type="entry name" value="Ribosomal_bL9/RNase_H1_N"/>
</dbReference>
<dbReference type="InterPro" id="IPR020594">
    <property type="entry name" value="Ribosomal_bL9_bac/chp"/>
</dbReference>
<dbReference type="InterPro" id="IPR020069">
    <property type="entry name" value="Ribosomal_bL9_C"/>
</dbReference>
<dbReference type="InterPro" id="IPR036791">
    <property type="entry name" value="Ribosomal_bL9_C_sf"/>
</dbReference>
<dbReference type="InterPro" id="IPR020070">
    <property type="entry name" value="Ribosomal_bL9_N"/>
</dbReference>
<dbReference type="InterPro" id="IPR036935">
    <property type="entry name" value="Ribosomal_bL9_N_sf"/>
</dbReference>
<dbReference type="NCBIfam" id="TIGR00158">
    <property type="entry name" value="L9"/>
    <property type="match status" value="1"/>
</dbReference>
<dbReference type="PANTHER" id="PTHR21368">
    <property type="entry name" value="50S RIBOSOMAL PROTEIN L9"/>
    <property type="match status" value="1"/>
</dbReference>
<dbReference type="Pfam" id="PF03948">
    <property type="entry name" value="Ribosomal_L9_C"/>
    <property type="match status" value="1"/>
</dbReference>
<dbReference type="Pfam" id="PF01281">
    <property type="entry name" value="Ribosomal_L9_N"/>
    <property type="match status" value="1"/>
</dbReference>
<dbReference type="SUPFAM" id="SSF55658">
    <property type="entry name" value="L9 N-domain-like"/>
    <property type="match status" value="1"/>
</dbReference>
<dbReference type="SUPFAM" id="SSF55653">
    <property type="entry name" value="Ribosomal protein L9 C-domain"/>
    <property type="match status" value="1"/>
</dbReference>
<dbReference type="PROSITE" id="PS00651">
    <property type="entry name" value="RIBOSOMAL_L9"/>
    <property type="match status" value="1"/>
</dbReference>
<protein>
    <recommendedName>
        <fullName evidence="1">Large ribosomal subunit protein bL9</fullName>
    </recommendedName>
    <alternativeName>
        <fullName evidence="2">50S ribosomal protein L9</fullName>
    </alternativeName>
</protein>
<reference key="1">
    <citation type="submission" date="2008-10" db="EMBL/GenBank/DDBJ databases">
        <title>Complete sequence of Desulfovibrio vulgaris str. 'Miyazaki F'.</title>
        <authorList>
            <person name="Lucas S."/>
            <person name="Copeland A."/>
            <person name="Lapidus A."/>
            <person name="Glavina del Rio T."/>
            <person name="Dalin E."/>
            <person name="Tice H."/>
            <person name="Bruce D."/>
            <person name="Goodwin L."/>
            <person name="Pitluck S."/>
            <person name="Sims D."/>
            <person name="Brettin T."/>
            <person name="Detter J.C."/>
            <person name="Han C."/>
            <person name="Larimer F."/>
            <person name="Land M."/>
            <person name="Hauser L."/>
            <person name="Kyrpides N."/>
            <person name="Mikhailova N."/>
            <person name="Hazen T.C."/>
            <person name="Richardson P."/>
        </authorList>
    </citation>
    <scope>NUCLEOTIDE SEQUENCE [LARGE SCALE GENOMIC DNA]</scope>
    <source>
        <strain>DSM 19637 / Miyazaki F</strain>
    </source>
</reference>
<keyword id="KW-0687">Ribonucleoprotein</keyword>
<keyword id="KW-0689">Ribosomal protein</keyword>
<keyword id="KW-0694">RNA-binding</keyword>
<keyword id="KW-0699">rRNA-binding</keyword>
<organism>
    <name type="scientific">Nitratidesulfovibrio vulgaris (strain DSM 19637 / Miyazaki F)</name>
    <name type="common">Desulfovibrio vulgaris</name>
    <dbReference type="NCBI Taxonomy" id="883"/>
    <lineage>
        <taxon>Bacteria</taxon>
        <taxon>Pseudomonadati</taxon>
        <taxon>Thermodesulfobacteriota</taxon>
        <taxon>Desulfovibrionia</taxon>
        <taxon>Desulfovibrionales</taxon>
        <taxon>Desulfovibrionaceae</taxon>
        <taxon>Nitratidesulfovibrio</taxon>
    </lineage>
</organism>
<proteinExistence type="inferred from homology"/>
<name>RL9_NITV9</name>